<reference key="1">
    <citation type="submission" date="2006-10" db="EMBL/GenBank/DDBJ databases">
        <authorList>
            <person name="Fleischmann R.D."/>
            <person name="Dodson R.J."/>
            <person name="Haft D.H."/>
            <person name="Merkel J.S."/>
            <person name="Nelson W.C."/>
            <person name="Fraser C.M."/>
        </authorList>
    </citation>
    <scope>NUCLEOTIDE SEQUENCE [LARGE SCALE GENOMIC DNA]</scope>
    <source>
        <strain>ATCC 700084 / mc(2)155</strain>
    </source>
</reference>
<reference key="2">
    <citation type="journal article" date="2007" name="Genome Biol.">
        <title>Interrupted coding sequences in Mycobacterium smegmatis: authentic mutations or sequencing errors?</title>
        <authorList>
            <person name="Deshayes C."/>
            <person name="Perrodou E."/>
            <person name="Gallien S."/>
            <person name="Euphrasie D."/>
            <person name="Schaeffer C."/>
            <person name="Van-Dorsselaer A."/>
            <person name="Poch O."/>
            <person name="Lecompte O."/>
            <person name="Reyrat J.-M."/>
        </authorList>
    </citation>
    <scope>NUCLEOTIDE SEQUENCE [LARGE SCALE GENOMIC DNA]</scope>
    <source>
        <strain>ATCC 700084 / mc(2)155</strain>
    </source>
</reference>
<reference key="3">
    <citation type="journal article" date="2009" name="Genome Res.">
        <title>Ortho-proteogenomics: multiple proteomes investigation through orthology and a new MS-based protocol.</title>
        <authorList>
            <person name="Gallien S."/>
            <person name="Perrodou E."/>
            <person name="Carapito C."/>
            <person name="Deshayes C."/>
            <person name="Reyrat J.-M."/>
            <person name="Van Dorsselaer A."/>
            <person name="Poch O."/>
            <person name="Schaeffer C."/>
            <person name="Lecompte O."/>
        </authorList>
    </citation>
    <scope>NUCLEOTIDE SEQUENCE [LARGE SCALE GENOMIC DNA]</scope>
    <scope>IDENTIFICATION BY MASS SPECTROMETRY [LARGE SCALE ANALYSIS]</scope>
    <source>
        <strain>ATCC 700084 / mc(2)155</strain>
    </source>
</reference>
<organism>
    <name type="scientific">Mycolicibacterium smegmatis (strain ATCC 700084 / mc(2)155)</name>
    <name type="common">Mycobacterium smegmatis</name>
    <dbReference type="NCBI Taxonomy" id="246196"/>
    <lineage>
        <taxon>Bacteria</taxon>
        <taxon>Bacillati</taxon>
        <taxon>Actinomycetota</taxon>
        <taxon>Actinomycetes</taxon>
        <taxon>Mycobacteriales</taxon>
        <taxon>Mycobacteriaceae</taxon>
        <taxon>Mycolicibacterium</taxon>
    </lineage>
</organism>
<protein>
    <recommendedName>
        <fullName evidence="1">Aromatic amino acid aminotransferase</fullName>
        <shortName evidence="1">ArAT</shortName>
        <ecNumber evidence="1">2.6.1.57</ecNumber>
    </recommendedName>
</protein>
<sequence>MSIRLRAEMADLPAYAPGKTVPGAIKIASNETVHGPLPSVREAILKATDLINRYPDNGYLDLRERLAKHVNFAPENISVGCGSVSLCQQLIQITSSVGDEVLFAWRSFEIYPLQVRTAGATPVAVALRDHTHDLDAMLAAITDRTRLIFVCNPNNPTSTVVDPGELARFVAAVPPHILVVLDEAYVEYIRDGLLPDSLGLVREHRNVVVLRTFSKAYGLAGLRVGYAVADPEIVTALGKVYVPFSATSVSQAAAIACLDAADELLARTDAVVAERTRVSDALRAAGYTLPPSQANFVWLPLAERTLDFVARAADNRIIVRPYGEDGVRVTIGAPHENDAFLDFAQRWIAPGGAGPRTGDSA</sequence>
<dbReference type="EC" id="2.6.1.57" evidence="1"/>
<dbReference type="EMBL" id="CP000480">
    <property type="protein sequence ID" value="ABK70318.1"/>
    <property type="molecule type" value="Genomic_DNA"/>
</dbReference>
<dbReference type="EMBL" id="CP001663">
    <property type="protein sequence ID" value="AFP42612.1"/>
    <property type="molecule type" value="Genomic_DNA"/>
</dbReference>
<dbReference type="RefSeq" id="YP_890566.1">
    <property type="nucleotide sequence ID" value="NC_008596.1"/>
</dbReference>
<dbReference type="SMR" id="A0R5X8"/>
<dbReference type="STRING" id="246196.MSMEG_6351"/>
<dbReference type="PaxDb" id="246196-MSMEI_6185"/>
<dbReference type="KEGG" id="msb:LJ00_31400"/>
<dbReference type="KEGG" id="msg:MSMEI_6185"/>
<dbReference type="KEGG" id="msm:MSMEG_6351"/>
<dbReference type="PATRIC" id="fig|246196.19.peg.6182"/>
<dbReference type="eggNOG" id="COG0079">
    <property type="taxonomic scope" value="Bacteria"/>
</dbReference>
<dbReference type="OrthoDB" id="9809616at2"/>
<dbReference type="Proteomes" id="UP000000757">
    <property type="component" value="Chromosome"/>
</dbReference>
<dbReference type="Proteomes" id="UP000006158">
    <property type="component" value="Chromosome"/>
</dbReference>
<dbReference type="GO" id="GO:0008793">
    <property type="term" value="F:aromatic-amino-acid transaminase activity"/>
    <property type="evidence" value="ECO:0007669"/>
    <property type="project" value="UniProtKB-UniRule"/>
</dbReference>
<dbReference type="GO" id="GO:0004400">
    <property type="term" value="F:histidinol-phosphate transaminase activity"/>
    <property type="evidence" value="ECO:0007669"/>
    <property type="project" value="InterPro"/>
</dbReference>
<dbReference type="GO" id="GO:0030170">
    <property type="term" value="F:pyridoxal phosphate binding"/>
    <property type="evidence" value="ECO:0007669"/>
    <property type="project" value="UniProtKB-UniRule"/>
</dbReference>
<dbReference type="GO" id="GO:0000105">
    <property type="term" value="P:L-histidine biosynthetic process"/>
    <property type="evidence" value="ECO:0007669"/>
    <property type="project" value="InterPro"/>
</dbReference>
<dbReference type="CDD" id="cd00609">
    <property type="entry name" value="AAT_like"/>
    <property type="match status" value="1"/>
</dbReference>
<dbReference type="Gene3D" id="3.90.1150.10">
    <property type="entry name" value="Aspartate Aminotransferase, domain 1"/>
    <property type="match status" value="1"/>
</dbReference>
<dbReference type="Gene3D" id="3.40.640.10">
    <property type="entry name" value="Type I PLP-dependent aspartate aminotransferase-like (Major domain)"/>
    <property type="match status" value="1"/>
</dbReference>
<dbReference type="HAMAP" id="MF_01023">
    <property type="entry name" value="HisC_aminotrans_2"/>
    <property type="match status" value="1"/>
</dbReference>
<dbReference type="HAMAP" id="MF_01513">
    <property type="entry name" value="Phe_aminotrans_2"/>
    <property type="match status" value="1"/>
</dbReference>
<dbReference type="InterPro" id="IPR001917">
    <property type="entry name" value="Aminotrans_II_pyridoxalP_BS"/>
</dbReference>
<dbReference type="InterPro" id="IPR004839">
    <property type="entry name" value="Aminotransferase_I/II_large"/>
</dbReference>
<dbReference type="InterPro" id="IPR024892">
    <property type="entry name" value="ArAT"/>
</dbReference>
<dbReference type="InterPro" id="IPR005861">
    <property type="entry name" value="HisP_aminotrans"/>
</dbReference>
<dbReference type="InterPro" id="IPR050106">
    <property type="entry name" value="HistidinolP_aminotransfase"/>
</dbReference>
<dbReference type="InterPro" id="IPR015424">
    <property type="entry name" value="PyrdxlP-dep_Trfase"/>
</dbReference>
<dbReference type="InterPro" id="IPR015421">
    <property type="entry name" value="PyrdxlP-dep_Trfase_major"/>
</dbReference>
<dbReference type="InterPro" id="IPR015422">
    <property type="entry name" value="PyrdxlP-dep_Trfase_small"/>
</dbReference>
<dbReference type="NCBIfam" id="TIGR01141">
    <property type="entry name" value="hisC"/>
    <property type="match status" value="1"/>
</dbReference>
<dbReference type="NCBIfam" id="NF002878">
    <property type="entry name" value="PRK03321.1"/>
    <property type="match status" value="1"/>
</dbReference>
<dbReference type="PANTHER" id="PTHR43643:SF3">
    <property type="entry name" value="HISTIDINOL-PHOSPHATE AMINOTRANSFERASE"/>
    <property type="match status" value="1"/>
</dbReference>
<dbReference type="PANTHER" id="PTHR43643">
    <property type="entry name" value="HISTIDINOL-PHOSPHATE AMINOTRANSFERASE 2"/>
    <property type="match status" value="1"/>
</dbReference>
<dbReference type="Pfam" id="PF00155">
    <property type="entry name" value="Aminotran_1_2"/>
    <property type="match status" value="1"/>
</dbReference>
<dbReference type="SUPFAM" id="SSF53383">
    <property type="entry name" value="PLP-dependent transferases"/>
    <property type="match status" value="1"/>
</dbReference>
<dbReference type="PROSITE" id="PS00599">
    <property type="entry name" value="AA_TRANSFER_CLASS_2"/>
    <property type="match status" value="1"/>
</dbReference>
<keyword id="KW-0032">Aminotransferase</keyword>
<keyword id="KW-0663">Pyridoxal phosphate</keyword>
<keyword id="KW-1185">Reference proteome</keyword>
<keyword id="KW-0808">Transferase</keyword>
<gene>
    <name evidence="1" type="primary">pat</name>
    <name type="ordered locus">MSMEG_6351</name>
    <name type="ordered locus">MSMEI_6185</name>
</gene>
<accession>A0R5X8</accession>
<accession>I7GAM4</accession>
<comment type="function">
    <text evidence="1">Aminotransferase that catalyzes the conversion of aromatic amino acids and 2-oxoglutarate into corresponding aromatic oxo acids and L-glutamate.</text>
</comment>
<comment type="catalytic activity">
    <reaction evidence="1">
        <text>an aromatic L-alpha-amino acid + 2-oxoglutarate = an aromatic oxo-acid + L-glutamate</text>
        <dbReference type="Rhea" id="RHEA:17533"/>
        <dbReference type="ChEBI" id="CHEBI:16810"/>
        <dbReference type="ChEBI" id="CHEBI:29985"/>
        <dbReference type="ChEBI" id="CHEBI:73309"/>
        <dbReference type="ChEBI" id="CHEBI:84824"/>
        <dbReference type="EC" id="2.6.1.57"/>
    </reaction>
</comment>
<comment type="cofactor">
    <cofactor evidence="1">
        <name>pyridoxal 5'-phosphate</name>
        <dbReference type="ChEBI" id="CHEBI:597326"/>
    </cofactor>
</comment>
<comment type="subunit">
    <text evidence="1">Homodimer.</text>
</comment>
<comment type="similarity">
    <text evidence="1">Belongs to the class-II pyridoxal-phosphate-dependent aminotransferase family.</text>
</comment>
<feature type="chain" id="PRO_1000024496" description="Aromatic amino acid aminotransferase">
    <location>
        <begin position="1"/>
        <end position="361"/>
    </location>
</feature>
<feature type="modified residue" description="N6-(pyridoxal phosphate)lysine" evidence="1">
    <location>
        <position position="215"/>
    </location>
</feature>
<proteinExistence type="evidence at protein level"/>
<evidence type="ECO:0000255" key="1">
    <source>
        <dbReference type="HAMAP-Rule" id="MF_01513"/>
    </source>
</evidence>
<name>PATR_MYCS2</name>